<gene>
    <name type="primary">Casp1</name>
    <name type="synonym">Il1bc</name>
</gene>
<name>CASP1_MOUSE</name>
<dbReference type="EC" id="3.4.22.36" evidence="6 7 12"/>
<dbReference type="EMBL" id="L03799">
    <property type="protein sequence ID" value="AAA39306.1"/>
    <property type="molecule type" value="mRNA"/>
</dbReference>
<dbReference type="EMBL" id="L28095">
    <property type="protein sequence ID" value="AAA20209.1"/>
    <property type="molecule type" value="mRNA"/>
</dbReference>
<dbReference type="EMBL" id="U04269">
    <property type="protein sequence ID" value="AAA56992.1"/>
    <property type="molecule type" value="Genomic_DNA"/>
</dbReference>
<dbReference type="EMBL" id="BC008152">
    <property type="protein sequence ID" value="AAH08152.1"/>
    <property type="molecule type" value="mRNA"/>
</dbReference>
<dbReference type="CCDS" id="CCDS22798.1"/>
<dbReference type="PIR" id="A46495">
    <property type="entry name" value="A46495"/>
</dbReference>
<dbReference type="RefSeq" id="NP_033937.2">
    <property type="nucleotide sequence ID" value="NM_009807.2"/>
</dbReference>
<dbReference type="SMR" id="P29452"/>
<dbReference type="BioGRID" id="198492">
    <property type="interactions" value="6"/>
</dbReference>
<dbReference type="ComplexPortal" id="CPX-4241">
    <property type="entry name" value="NLRP3 inflammasome"/>
</dbReference>
<dbReference type="ComplexPortal" id="CPX-4242">
    <property type="entry name" value="Caspase-1 complex"/>
</dbReference>
<dbReference type="ComplexPortal" id="CPX-4243">
    <property type="entry name" value="AIM2 inflammasome"/>
</dbReference>
<dbReference type="ComplexPortal" id="CPX-4244">
    <property type="entry name" value="Pyrin inflammasome"/>
</dbReference>
<dbReference type="ComplexPortal" id="CPX-4261">
    <property type="entry name" value="NLRP1b inflammasome, allele-1 variant"/>
</dbReference>
<dbReference type="ComplexPortal" id="CPX-4266">
    <property type="entry name" value="NLRP1b inflammasome, allele-2 variant"/>
</dbReference>
<dbReference type="ComplexPortal" id="CPX-4269">
    <property type="entry name" value="NLRP1b inflammasome, allele-3 variant"/>
</dbReference>
<dbReference type="ComplexPortal" id="CPX-4270">
    <property type="entry name" value="NLRP1b inflammasome, allele-5 variant"/>
</dbReference>
<dbReference type="ComplexPortal" id="CPX-4271">
    <property type="entry name" value="NLRP1a inflammasome"/>
</dbReference>
<dbReference type="CORUM" id="P29452"/>
<dbReference type="DIP" id="DIP-34659N"/>
<dbReference type="FunCoup" id="P29452">
    <property type="interactions" value="112"/>
</dbReference>
<dbReference type="IntAct" id="P29452">
    <property type="interactions" value="8"/>
</dbReference>
<dbReference type="MINT" id="P29452"/>
<dbReference type="STRING" id="10090.ENSMUSP00000027015"/>
<dbReference type="BindingDB" id="P29452"/>
<dbReference type="ChEMBL" id="CHEMBL4800"/>
<dbReference type="MEROPS" id="C14.001"/>
<dbReference type="iPTMnet" id="P29452"/>
<dbReference type="PhosphoSitePlus" id="P29452"/>
<dbReference type="SwissPalm" id="P29452"/>
<dbReference type="PaxDb" id="10090-ENSMUSP00000027015"/>
<dbReference type="PeptideAtlas" id="P29452"/>
<dbReference type="ProteomicsDB" id="279913"/>
<dbReference type="Antibodypedia" id="1075">
    <property type="antibodies" value="1118 antibodies from 48 providers"/>
</dbReference>
<dbReference type="DNASU" id="12362"/>
<dbReference type="Ensembl" id="ENSMUST00000027015.7">
    <property type="protein sequence ID" value="ENSMUSP00000027015.6"/>
    <property type="gene ID" value="ENSMUSG00000025888.7"/>
</dbReference>
<dbReference type="GeneID" id="12362"/>
<dbReference type="KEGG" id="mmu:12362"/>
<dbReference type="UCSC" id="uc009obr.1">
    <property type="organism name" value="mouse"/>
</dbReference>
<dbReference type="AGR" id="MGI:96544"/>
<dbReference type="CTD" id="834"/>
<dbReference type="MGI" id="MGI:96544">
    <property type="gene designation" value="Casp1"/>
</dbReference>
<dbReference type="VEuPathDB" id="HostDB:ENSMUSG00000025888"/>
<dbReference type="eggNOG" id="KOG3573">
    <property type="taxonomic scope" value="Eukaryota"/>
</dbReference>
<dbReference type="GeneTree" id="ENSGT00940000159114"/>
<dbReference type="HOGENOM" id="CLU_036904_0_1_1"/>
<dbReference type="InParanoid" id="P29452"/>
<dbReference type="OMA" id="QYIVQVF"/>
<dbReference type="OrthoDB" id="6097640at2759"/>
<dbReference type="PhylomeDB" id="P29452"/>
<dbReference type="TreeFam" id="TF102023"/>
<dbReference type="BRENDA" id="3.4.22.36">
    <property type="organism ID" value="3474"/>
</dbReference>
<dbReference type="Reactome" id="R-MMU-168638">
    <property type="pathway name" value="NOD1/2 Signaling Pathway"/>
</dbReference>
<dbReference type="Reactome" id="R-MMU-448706">
    <property type="pathway name" value="Interleukin-1 processing"/>
</dbReference>
<dbReference type="Reactome" id="R-MMU-5620971">
    <property type="pathway name" value="Pyroptosis"/>
</dbReference>
<dbReference type="BioGRID-ORCS" id="12362">
    <property type="hits" value="3 hits in 76 CRISPR screens"/>
</dbReference>
<dbReference type="ChiTaRS" id="Casp1">
    <property type="organism name" value="mouse"/>
</dbReference>
<dbReference type="PRO" id="PR:P29452"/>
<dbReference type="Proteomes" id="UP000000589">
    <property type="component" value="Chromosome 9"/>
</dbReference>
<dbReference type="RNAct" id="P29452">
    <property type="molecule type" value="protein"/>
</dbReference>
<dbReference type="Bgee" id="ENSMUSG00000025888">
    <property type="expression patterns" value="Expressed in paneth cell and 116 other cell types or tissues"/>
</dbReference>
<dbReference type="ExpressionAtlas" id="P29452">
    <property type="expression patterns" value="baseline and differential"/>
</dbReference>
<dbReference type="GO" id="GO:0097169">
    <property type="term" value="C:AIM2 inflammasome complex"/>
    <property type="evidence" value="ECO:0000250"/>
    <property type="project" value="UniProtKB"/>
</dbReference>
<dbReference type="GO" id="GO:0061702">
    <property type="term" value="C:canonical inflammasome complex"/>
    <property type="evidence" value="ECO:0000266"/>
    <property type="project" value="ComplexPortal"/>
</dbReference>
<dbReference type="GO" id="GO:0005737">
    <property type="term" value="C:cytoplasm"/>
    <property type="evidence" value="ECO:0000314"/>
    <property type="project" value="UniProt"/>
</dbReference>
<dbReference type="GO" id="GO:0005829">
    <property type="term" value="C:cytosol"/>
    <property type="evidence" value="ECO:0000314"/>
    <property type="project" value="UniProt"/>
</dbReference>
<dbReference type="GO" id="GO:0005576">
    <property type="term" value="C:extracellular region"/>
    <property type="evidence" value="ECO:0000314"/>
    <property type="project" value="MGI"/>
</dbReference>
<dbReference type="GO" id="GO:0072557">
    <property type="term" value="C:IPAF inflammasome complex"/>
    <property type="evidence" value="ECO:0000314"/>
    <property type="project" value="UniProtKB"/>
</dbReference>
<dbReference type="GO" id="GO:0005874">
    <property type="term" value="C:microtubule"/>
    <property type="evidence" value="ECO:0000303"/>
    <property type="project" value="ComplexPortal"/>
</dbReference>
<dbReference type="GO" id="GO:0005739">
    <property type="term" value="C:mitochondrion"/>
    <property type="evidence" value="ECO:0007669"/>
    <property type="project" value="GOC"/>
</dbReference>
<dbReference type="GO" id="GO:0072558">
    <property type="term" value="C:NLRP1 inflammasome complex"/>
    <property type="evidence" value="ECO:0000250"/>
    <property type="project" value="UniProtKB"/>
</dbReference>
<dbReference type="GO" id="GO:0072559">
    <property type="term" value="C:NLRP3 inflammasome complex"/>
    <property type="evidence" value="ECO:0000250"/>
    <property type="project" value="UniProtKB"/>
</dbReference>
<dbReference type="GO" id="GO:0005886">
    <property type="term" value="C:plasma membrane"/>
    <property type="evidence" value="ECO:0007669"/>
    <property type="project" value="UniProtKB-SubCell"/>
</dbReference>
<dbReference type="GO" id="GO:0004197">
    <property type="term" value="F:cysteine-type endopeptidase activity"/>
    <property type="evidence" value="ECO:0000314"/>
    <property type="project" value="UniProtKB"/>
</dbReference>
<dbReference type="GO" id="GO:0008233">
    <property type="term" value="F:peptidase activity"/>
    <property type="evidence" value="ECO:0000314"/>
    <property type="project" value="MGI"/>
</dbReference>
<dbReference type="GO" id="GO:0140970">
    <property type="term" value="P:AIM2 inflammasome complex assembly"/>
    <property type="evidence" value="ECO:0000314"/>
    <property type="project" value="UniProt"/>
</dbReference>
<dbReference type="GO" id="GO:0006915">
    <property type="term" value="P:apoptotic process"/>
    <property type="evidence" value="ECO:0007669"/>
    <property type="project" value="UniProtKB-KW"/>
</dbReference>
<dbReference type="GO" id="GO:0042742">
    <property type="term" value="P:defense response to bacterium"/>
    <property type="evidence" value="ECO:0000314"/>
    <property type="project" value="UniProt"/>
</dbReference>
<dbReference type="GO" id="GO:0050829">
    <property type="term" value="P:defense response to Gram-negative bacterium"/>
    <property type="evidence" value="ECO:0000315"/>
    <property type="project" value="ARUK-UCL"/>
</dbReference>
<dbReference type="GO" id="GO:0051607">
    <property type="term" value="P:defense response to virus"/>
    <property type="evidence" value="ECO:0000303"/>
    <property type="project" value="ComplexPortal"/>
</dbReference>
<dbReference type="GO" id="GO:0060081">
    <property type="term" value="P:membrane hyperpolarization"/>
    <property type="evidence" value="ECO:0000315"/>
    <property type="project" value="MGI"/>
</dbReference>
<dbReference type="GO" id="GO:0051882">
    <property type="term" value="P:mitochondrial depolarization"/>
    <property type="evidence" value="ECO:0000315"/>
    <property type="project" value="MGI"/>
</dbReference>
<dbReference type="GO" id="GO:0007231">
    <property type="term" value="P:osmosensory signaling pathway"/>
    <property type="evidence" value="ECO:0000303"/>
    <property type="project" value="ComplexPortal"/>
</dbReference>
<dbReference type="GO" id="GO:0002221">
    <property type="term" value="P:pattern recognition receptor signaling pathway"/>
    <property type="evidence" value="ECO:0000303"/>
    <property type="project" value="ComplexPortal"/>
</dbReference>
<dbReference type="GO" id="GO:0043123">
    <property type="term" value="P:positive regulation of canonical NF-kappaB signal transduction"/>
    <property type="evidence" value="ECO:0000314"/>
    <property type="project" value="UniProtKB"/>
</dbReference>
<dbReference type="GO" id="GO:0001819">
    <property type="term" value="P:positive regulation of cytokine production"/>
    <property type="evidence" value="ECO:0000314"/>
    <property type="project" value="UniProtKB"/>
</dbReference>
<dbReference type="GO" id="GO:0050729">
    <property type="term" value="P:positive regulation of inflammatory response"/>
    <property type="evidence" value="ECO:0000314"/>
    <property type="project" value="ComplexPortal"/>
</dbReference>
<dbReference type="GO" id="GO:0032730">
    <property type="term" value="P:positive regulation of interleukin-1 alpha production"/>
    <property type="evidence" value="ECO:0000315"/>
    <property type="project" value="MGI"/>
</dbReference>
<dbReference type="GO" id="GO:0032731">
    <property type="term" value="P:positive regulation of interleukin-1 beta production"/>
    <property type="evidence" value="ECO:0000314"/>
    <property type="project" value="UniProtKB"/>
</dbReference>
<dbReference type="GO" id="GO:0060907">
    <property type="term" value="P:positive regulation of macrophage cytokine production"/>
    <property type="evidence" value="ECO:0000315"/>
    <property type="project" value="MGI"/>
</dbReference>
<dbReference type="GO" id="GO:0097300">
    <property type="term" value="P:programmed necrotic cell death"/>
    <property type="evidence" value="ECO:0000314"/>
    <property type="project" value="MGI"/>
</dbReference>
<dbReference type="GO" id="GO:0016540">
    <property type="term" value="P:protein autoprocessing"/>
    <property type="evidence" value="ECO:0000314"/>
    <property type="project" value="UniProtKB"/>
</dbReference>
<dbReference type="GO" id="GO:0051604">
    <property type="term" value="P:protein maturation"/>
    <property type="evidence" value="ECO:0000314"/>
    <property type="project" value="UniProt"/>
</dbReference>
<dbReference type="GO" id="GO:0016485">
    <property type="term" value="P:protein processing"/>
    <property type="evidence" value="ECO:0000314"/>
    <property type="project" value="MGI"/>
</dbReference>
<dbReference type="GO" id="GO:0070269">
    <property type="term" value="P:pyroptotic inflammatory response"/>
    <property type="evidence" value="ECO:0000314"/>
    <property type="project" value="UniProtKB"/>
</dbReference>
<dbReference type="GO" id="GO:0042981">
    <property type="term" value="P:regulation of apoptotic process"/>
    <property type="evidence" value="ECO:0007669"/>
    <property type="project" value="InterPro"/>
</dbReference>
<dbReference type="GO" id="GO:0010506">
    <property type="term" value="P:regulation of autophagy"/>
    <property type="evidence" value="ECO:0000315"/>
    <property type="project" value="MGI"/>
</dbReference>
<dbReference type="GO" id="GO:0050727">
    <property type="term" value="P:regulation of inflammatory response"/>
    <property type="evidence" value="ECO:0000315"/>
    <property type="project" value="MGI"/>
</dbReference>
<dbReference type="GO" id="GO:0033198">
    <property type="term" value="P:response to ATP"/>
    <property type="evidence" value="ECO:0000315"/>
    <property type="project" value="MGI"/>
</dbReference>
<dbReference type="GO" id="GO:0009617">
    <property type="term" value="P:response to bacterium"/>
    <property type="evidence" value="ECO:0000315"/>
    <property type="project" value="MGI"/>
</dbReference>
<dbReference type="GO" id="GO:0001666">
    <property type="term" value="P:response to hypoxia"/>
    <property type="evidence" value="ECO:0000315"/>
    <property type="project" value="MGI"/>
</dbReference>
<dbReference type="GO" id="GO:0032496">
    <property type="term" value="P:response to lipopolysaccharide"/>
    <property type="evidence" value="ECO:0000314"/>
    <property type="project" value="MGI"/>
</dbReference>
<dbReference type="CDD" id="cd08325">
    <property type="entry name" value="CARD_CASP1-like"/>
    <property type="match status" value="1"/>
</dbReference>
<dbReference type="CDD" id="cd00032">
    <property type="entry name" value="CASc"/>
    <property type="match status" value="1"/>
</dbReference>
<dbReference type="FunFam" id="1.10.533.10:FF:000031">
    <property type="entry name" value="Caspase 1, isoform CRA_b"/>
    <property type="match status" value="1"/>
</dbReference>
<dbReference type="FunFam" id="3.40.50.1460:FF:000007">
    <property type="entry name" value="Caspase-1"/>
    <property type="match status" value="1"/>
</dbReference>
<dbReference type="Gene3D" id="3.40.50.1460">
    <property type="match status" value="1"/>
</dbReference>
<dbReference type="Gene3D" id="1.10.533.10">
    <property type="entry name" value="Death Domain, Fas"/>
    <property type="match status" value="1"/>
</dbReference>
<dbReference type="InterPro" id="IPR001315">
    <property type="entry name" value="CARD"/>
</dbReference>
<dbReference type="InterPro" id="IPR029030">
    <property type="entry name" value="Caspase-like_dom_sf"/>
</dbReference>
<dbReference type="InterPro" id="IPR033139">
    <property type="entry name" value="Caspase_cys_AS"/>
</dbReference>
<dbReference type="InterPro" id="IPR016129">
    <property type="entry name" value="Caspase_his_AS"/>
</dbReference>
<dbReference type="InterPro" id="IPR011029">
    <property type="entry name" value="DEATH-like_dom_sf"/>
</dbReference>
<dbReference type="InterPro" id="IPR002398">
    <property type="entry name" value="Pept_C14"/>
</dbReference>
<dbReference type="InterPro" id="IPR011600">
    <property type="entry name" value="Pept_C14_caspase"/>
</dbReference>
<dbReference type="InterPro" id="IPR002138">
    <property type="entry name" value="Pept_C14_p10"/>
</dbReference>
<dbReference type="InterPro" id="IPR001309">
    <property type="entry name" value="Pept_C14_p20"/>
</dbReference>
<dbReference type="InterPro" id="IPR015917">
    <property type="entry name" value="Pept_C14A"/>
</dbReference>
<dbReference type="PANTHER" id="PTHR47901">
    <property type="entry name" value="CASPASE RECRUITMENT DOMAIN-CONTAINING PROTEIN 18"/>
    <property type="match status" value="1"/>
</dbReference>
<dbReference type="PANTHER" id="PTHR47901:SF3">
    <property type="entry name" value="CASPASE-1"/>
    <property type="match status" value="1"/>
</dbReference>
<dbReference type="Pfam" id="PF00619">
    <property type="entry name" value="CARD"/>
    <property type="match status" value="1"/>
</dbReference>
<dbReference type="Pfam" id="PF00656">
    <property type="entry name" value="Peptidase_C14"/>
    <property type="match status" value="1"/>
</dbReference>
<dbReference type="PIRSF" id="PIRSF038001">
    <property type="entry name" value="Caspase_ICE"/>
    <property type="match status" value="1"/>
</dbReference>
<dbReference type="PRINTS" id="PR00376">
    <property type="entry name" value="IL1BCENZYME"/>
</dbReference>
<dbReference type="SMART" id="SM00114">
    <property type="entry name" value="CARD"/>
    <property type="match status" value="1"/>
</dbReference>
<dbReference type="SMART" id="SM00115">
    <property type="entry name" value="CASc"/>
    <property type="match status" value="1"/>
</dbReference>
<dbReference type="SUPFAM" id="SSF52129">
    <property type="entry name" value="Caspase-like"/>
    <property type="match status" value="1"/>
</dbReference>
<dbReference type="SUPFAM" id="SSF47986">
    <property type="entry name" value="DEATH domain"/>
    <property type="match status" value="1"/>
</dbReference>
<dbReference type="PROSITE" id="PS50209">
    <property type="entry name" value="CARD"/>
    <property type="match status" value="1"/>
</dbReference>
<dbReference type="PROSITE" id="PS01122">
    <property type="entry name" value="CASPASE_CYS"/>
    <property type="match status" value="1"/>
</dbReference>
<dbReference type="PROSITE" id="PS01121">
    <property type="entry name" value="CASPASE_HIS"/>
    <property type="match status" value="1"/>
</dbReference>
<dbReference type="PROSITE" id="PS50207">
    <property type="entry name" value="CASPASE_P10"/>
    <property type="match status" value="1"/>
</dbReference>
<dbReference type="PROSITE" id="PS50208">
    <property type="entry name" value="CASPASE_P20"/>
    <property type="match status" value="1"/>
</dbReference>
<protein>
    <recommendedName>
        <fullName>Caspase-1</fullName>
        <shortName>CASP-1</shortName>
        <ecNumber evidence="6 7 12">3.4.22.36</ecNumber>
    </recommendedName>
    <alternativeName>
        <fullName>Interleukin-1 beta convertase</fullName>
        <shortName>IL-1BC</shortName>
    </alternativeName>
    <alternativeName>
        <fullName>Interleukin-1 beta-converting enzyme</fullName>
        <shortName>ICE</shortName>
        <shortName>IL-1 beta-converting enzyme</shortName>
    </alternativeName>
    <alternativeName>
        <fullName>p45</fullName>
    </alternativeName>
    <component>
        <recommendedName>
            <fullName evidence="15">Caspase-1 subunit p20</fullName>
        </recommendedName>
    </component>
    <component>
        <recommendedName>
            <fullName evidence="15">Caspase-1 subunit p10</fullName>
        </recommendedName>
    </component>
</protein>
<feature type="propeptide" id="PRO_0000004525" evidence="2">
    <location>
        <begin position="1"/>
        <end position="118" status="uncertain"/>
    </location>
</feature>
<feature type="chain" id="PRO_0000004526" description="Caspase-1 subunit p20" evidence="15">
    <location>
        <begin position="119" status="uncertain"/>
        <end position="296"/>
    </location>
</feature>
<feature type="propeptide" id="PRO_0000004527" evidence="2">
    <location>
        <begin position="297"/>
        <end position="314"/>
    </location>
</feature>
<feature type="chain" id="PRO_0000004528" description="Caspase-1 subunit p10" evidence="15">
    <location>
        <begin position="315"/>
        <end position="402"/>
    </location>
</feature>
<feature type="domain" description="CARD" evidence="3">
    <location>
        <begin position="1"/>
        <end position="91"/>
    </location>
</feature>
<feature type="region of interest" description="Disordered" evidence="4">
    <location>
        <begin position="98"/>
        <end position="125"/>
    </location>
</feature>
<feature type="compositionally biased region" description="Basic and acidic residues" evidence="4">
    <location>
        <begin position="113"/>
        <end position="123"/>
    </location>
</feature>
<feature type="active site" evidence="1">
    <location>
        <position position="236"/>
    </location>
</feature>
<feature type="active site" evidence="14">
    <location>
        <position position="284"/>
    </location>
</feature>
<feature type="site" description="Cleavage; by autolysis" evidence="14">
    <location>
        <begin position="103"/>
        <end position="104"/>
    </location>
</feature>
<feature type="site" description="Cleavage; by autolysis" evidence="14">
    <location>
        <begin position="122"/>
        <end position="123"/>
    </location>
</feature>
<feature type="modified residue" description="Phosphoserine" evidence="16">
    <location>
        <position position="301"/>
    </location>
</feature>
<feature type="modified residue" description="Omega-N-methylarginine" evidence="17">
    <location>
        <position position="343"/>
    </location>
</feature>
<feature type="mutagenesis site" description="Prevents autoprocessing." evidence="10">
    <original>EDSKGGHPSSSETKEEQNKED</original>
    <variation>AASKGGHPSSSATKAAQNKAA</variation>
    <location>
        <begin position="102"/>
        <end position="122"/>
    </location>
</feature>
<feature type="mutagenesis site" description="In C71 mutant; abolished cleavage and ability to generate caspase-1 subunits; abolished ability to process inflammatory cytokine interleukin-1 beta (IL1B) and ability to induce programmed cell death; when associated with N-122 and 296-N--N-314." evidence="7">
    <original>D</original>
    <variation>N</variation>
    <location>
        <position position="103"/>
    </location>
</feature>
<feature type="mutagenesis site" description="In C71 mutant; abolished cleavage and ability to generate caspase-1 subunits; abolished ability to process inflammatory cytokine interleukin-1 beta (IL1B) and ability to induce programmed cell death; when associated with N-103 and 296-N--N-314." evidence="7">
    <original>D</original>
    <variation>N</variation>
    <location>
        <position position="122"/>
    </location>
</feature>
<feature type="mutagenesis site" description="Loss of protease activity." evidence="7">
    <original>C</original>
    <variation>A</variation>
    <location>
        <position position="284"/>
    </location>
</feature>
<feature type="mutagenesis site" description="In C71 mutant; abolished cleavage and ability to generate caspase-1 subunits; abolished ability to process inflammatory cytokine interleukin-1 beta (IL1B) and ability to induce programmed cell death; when associated with N-103 and N-122." evidence="7">
    <original>DSVRDSEEDFLTDAIFEDD</original>
    <variation>NSVRDSEEDFLTNAIFENN</variation>
    <location>
        <begin position="296"/>
        <end position="314"/>
    </location>
</feature>
<feature type="mutagenesis site" description="In C60 mutant; impaired cleavage and ability to generate caspase-1 subunits p10 and p20; abolished ability to process inflammatory cytokine interleukin-1 beta (IL1B) without affecting ability to induce programmed cell death." evidence="7">
    <original>DSVRDSEEDFLTDAIFEDD</original>
    <variation>NSVRNSEENFLTNAIFENN</variation>
    <location>
        <begin position="296"/>
        <end position="314"/>
    </location>
</feature>
<feature type="mutagenesis site" description="In C47 mutant; does not affect ability to mediate inflammatory response; when associated with 313-N-N-314." evidence="7">
    <original>D</original>
    <variation>N</variation>
    <location>
        <position position="296"/>
    </location>
</feature>
<feature type="mutagenesis site" description="In C47 mutant; does not affect ability to mediate inflammatory response and cell death; when associated with N-296." evidence="7">
    <original>DD</original>
    <variation>NN</variation>
    <location>
        <begin position="313"/>
        <end position="314"/>
    </location>
</feature>
<feature type="mutagenesis site" description="Mediates autoprocessing but are unable to mediate cleavage of Gasdermin-D (GSDMD)." evidence="10">
    <original>I</original>
    <variation>N</variation>
    <location>
        <position position="316"/>
    </location>
</feature>
<feature type="sequence conflict" description="In Ref. 3; AAA56992." evidence="13" ref="3">
    <original>DKIL</original>
    <variation>V</variation>
    <location>
        <begin position="3"/>
        <end position="6"/>
    </location>
</feature>
<sequence length="402" mass="45640">MADKILRAKRKQFINSVSIGTINGLLDELLEKRVLNQEEMDKIKLANITAMDKARDLCDHVSKKGPQASQIFITYICNEDCYLAGILELQSAPSAETFVATEDSKGGHPSSSETKEEQNKEDGTFPGLTGTLKFCPLEKAQKLWKENPSEIYPIMNTTTRTRLALIICNTEFQHLSPRVGAQVDLREMKLLLEDLGYTVKVKENLTALEMVKEVKEFAACPEHKTSDSTFLVFMSHGIQEGICGTTYSNEVSDILKVDTIFQMMNTLKCPSLKDKPKVIIIQACRGEKQGVVLLKDSVRDSEEDFLTDAIFEDDGIKKAHIEKDFIAFCSSTPDNVSWRHPVRGSLFIESLIKHMKEYAWSCDLEDIFRKVRFSFEQPEFRLQMPTADRVTLTKRFYLFPGH</sequence>
<keyword id="KW-0053">Apoptosis</keyword>
<keyword id="KW-1003">Cell membrane</keyword>
<keyword id="KW-0963">Cytoplasm</keyword>
<keyword id="KW-0378">Hydrolase</keyword>
<keyword id="KW-0472">Membrane</keyword>
<keyword id="KW-0488">Methylation</keyword>
<keyword id="KW-0597">Phosphoprotein</keyword>
<keyword id="KW-0645">Protease</keyword>
<keyword id="KW-1185">Reference proteome</keyword>
<keyword id="KW-0788">Thiol protease</keyword>
<keyword id="KW-0832">Ubl conjugation</keyword>
<keyword id="KW-0865">Zymogen</keyword>
<evidence type="ECO:0000250" key="1">
    <source>
        <dbReference type="UniProtKB" id="P29466"/>
    </source>
</evidence>
<evidence type="ECO:0000255" key="2"/>
<evidence type="ECO:0000255" key="3">
    <source>
        <dbReference type="PROSITE-ProRule" id="PRU00046"/>
    </source>
</evidence>
<evidence type="ECO:0000256" key="4">
    <source>
        <dbReference type="SAM" id="MobiDB-lite"/>
    </source>
</evidence>
<evidence type="ECO:0000269" key="5">
    <source>
    </source>
</evidence>
<evidence type="ECO:0000269" key="6">
    <source>
    </source>
</evidence>
<evidence type="ECO:0000269" key="7">
    <source>
    </source>
</evidence>
<evidence type="ECO:0000269" key="8">
    <source>
    </source>
</evidence>
<evidence type="ECO:0000269" key="9">
    <source>
    </source>
</evidence>
<evidence type="ECO:0000269" key="10">
    <source>
    </source>
</evidence>
<evidence type="ECO:0000269" key="11">
    <source>
    </source>
</evidence>
<evidence type="ECO:0000269" key="12">
    <source>
    </source>
</evidence>
<evidence type="ECO:0000305" key="13"/>
<evidence type="ECO:0000305" key="14">
    <source>
    </source>
</evidence>
<evidence type="ECO:0000305" key="15">
    <source>
    </source>
</evidence>
<evidence type="ECO:0007744" key="16">
    <source>
    </source>
</evidence>
<evidence type="ECO:0007744" key="17">
    <source>
    </source>
</evidence>
<organism>
    <name type="scientific">Mus musculus</name>
    <name type="common">Mouse</name>
    <dbReference type="NCBI Taxonomy" id="10090"/>
    <lineage>
        <taxon>Eukaryota</taxon>
        <taxon>Metazoa</taxon>
        <taxon>Chordata</taxon>
        <taxon>Craniata</taxon>
        <taxon>Vertebrata</taxon>
        <taxon>Euteleostomi</taxon>
        <taxon>Mammalia</taxon>
        <taxon>Eutheria</taxon>
        <taxon>Euarchontoglires</taxon>
        <taxon>Glires</taxon>
        <taxon>Rodentia</taxon>
        <taxon>Myomorpha</taxon>
        <taxon>Muroidea</taxon>
        <taxon>Muridae</taxon>
        <taxon>Murinae</taxon>
        <taxon>Mus</taxon>
        <taxon>Mus</taxon>
    </lineage>
</organism>
<reference key="1">
    <citation type="journal article" date="1992" name="J. Immunol.">
        <title>Molecular cloning of the murine IL-1 beta converting enzyme cDNA.</title>
        <authorList>
            <person name="Nett-Fiordalisi M.A."/>
            <person name="Cerretti D.P."/>
            <person name="Berson D.R."/>
            <person name="Gilbert D.J."/>
            <person name="Jenkins N.A."/>
            <person name="Copeland N.G."/>
            <person name="Black R.A."/>
            <person name="Chaplin D.D."/>
        </authorList>
    </citation>
    <scope>NUCLEOTIDE SEQUENCE [MRNA]</scope>
    <scope>TISSUE SPECIFICITY</scope>
</reference>
<reference key="2">
    <citation type="journal article" date="1993" name="Proc. Natl. Acad. Sci. U.S.A.">
        <title>Interleukin 1 beta (IL-1 beta) processing in murine macrophages requires a structurally conserved homologue of human IL-1 beta converting enzyme.</title>
        <authorList>
            <person name="Molineaux S.M."/>
            <person name="Casano F.J."/>
            <person name="Rolando A.M."/>
            <person name="Peterson E.P."/>
            <person name="Limjuco G."/>
            <person name="Chin J."/>
            <person name="Griffin P.R."/>
            <person name="Calaycay J.R."/>
            <person name="Ding G.J.-F."/>
            <person name="Yamin T.-T."/>
            <person name="Palyha O.C."/>
            <person name="Luell S."/>
            <person name="Fletcher D."/>
            <person name="Miller D.K."/>
            <person name="Howard A.D."/>
            <person name="Thornberry N.A."/>
            <person name="Kostura M.J."/>
        </authorList>
    </citation>
    <scope>NUCLEOTIDE SEQUENCE [MRNA]</scope>
</reference>
<reference key="3">
    <citation type="journal article" date="1994" name="Genomics">
        <title>The structure and complete nucleotide sequence of the murine gene encoding interleukin-1 beta converting enzyme (ICE).</title>
        <authorList>
            <person name="Casano F.J."/>
            <person name="Rolando A.M."/>
            <person name="Mudgett J.S."/>
            <person name="Molineaux S.M."/>
        </authorList>
    </citation>
    <scope>NUCLEOTIDE SEQUENCE [GENOMIC DNA]</scope>
    <source>
        <strain>129</strain>
    </source>
</reference>
<reference key="4">
    <citation type="journal article" date="2004" name="Genome Res.">
        <title>The status, quality, and expansion of the NIH full-length cDNA project: the Mammalian Gene Collection (MGC).</title>
        <authorList>
            <consortium name="The MGC Project Team"/>
        </authorList>
    </citation>
    <scope>NUCLEOTIDE SEQUENCE [LARGE SCALE MRNA]</scope>
    <source>
        <strain>FVB/N</strain>
        <tissue>Mammary gland</tissue>
    </source>
</reference>
<reference key="5">
    <citation type="journal article" date="1997" name="FEBS Lett.">
        <title>Characterization of seven murine caspase family members.</title>
        <authorList>
            <person name="van de Craen M."/>
            <person name="Vandenabeele P."/>
            <person name="Declercq W."/>
            <person name="van den Brande I."/>
            <person name="van Loo G."/>
            <person name="Molemans F."/>
            <person name="Schotte P."/>
            <person name="van Criekinge W."/>
            <person name="Beyaert R."/>
            <person name="Fiers W."/>
        </authorList>
    </citation>
    <scope>CHARACTERIZATION</scope>
    <source>
        <strain>C3H/An</strain>
    </source>
</reference>
<reference key="6">
    <citation type="journal article" date="2008" name="Mol. Cell. Proteomics">
        <title>Targeted peptidecentric proteomics reveals caspase-7 as a substrate of the caspase-1 inflammasomes.</title>
        <authorList>
            <person name="Lamkanfi M."/>
            <person name="Kanneganti T.D."/>
            <person name="Van Damme P."/>
            <person name="Vanden Berghe T."/>
            <person name="Vanoverberghe I."/>
            <person name="Vandekerckhove J."/>
            <person name="Vandenabeele P."/>
            <person name="Gevaert K."/>
            <person name="Nunez G."/>
        </authorList>
    </citation>
    <scope>FUNCTION</scope>
    <scope>CATALYTIC ACTIVITY</scope>
</reference>
<reference key="7">
    <citation type="journal article" date="2010" name="Cell">
        <title>A tissue-specific atlas of mouse protein phosphorylation and expression.</title>
        <authorList>
            <person name="Huttlin E.L."/>
            <person name="Jedrychowski M.P."/>
            <person name="Elias J.E."/>
            <person name="Goswami T."/>
            <person name="Rad R."/>
            <person name="Beausoleil S.A."/>
            <person name="Villen J."/>
            <person name="Haas W."/>
            <person name="Sowa M.E."/>
            <person name="Gygi S.P."/>
        </authorList>
    </citation>
    <scope>PHOSPHORYLATION [LARGE SCALE ANALYSIS] AT SER-301</scope>
    <scope>IDENTIFICATION BY MASS SPECTROMETRY [LARGE SCALE ANALYSIS]</scope>
    <source>
        <tissue>Spleen</tissue>
    </source>
</reference>
<reference key="8">
    <citation type="journal article" date="2010" name="Cell Host Microbe">
        <title>Differential requirement for Caspase-1 autoproteolysis in pathogen-induced cell death and cytokine processing.</title>
        <authorList>
            <person name="Broz P."/>
            <person name="von Moltke J."/>
            <person name="Jones J.W."/>
            <person name="Vance R.E."/>
            <person name="Monack D.M."/>
        </authorList>
    </citation>
    <scope>FUNCTION</scope>
    <scope>CATALYTIC ACTIVITY</scope>
    <scope>SUBCELLULAR LOCATION</scope>
    <scope>PROTEOLYTIC CLEAVAGE</scope>
    <scope>ACTIVE SITE</scope>
    <scope>MUTAGENESIS OF ASP-103; ASP-122; CYS-284; 296-ASP--ASP-314; ASP-296 AND 313-ASP-ASP-314</scope>
</reference>
<reference key="9">
    <citation type="journal article" date="2012" name="Mol. Cell">
        <title>Inflammasome-activated caspase 7 cleaves PARP1 to enhance the expression of a subset of NF-kappaB target genes.</title>
        <authorList>
            <person name="Erener S."/>
            <person name="Petrilli V."/>
            <person name="Kassner I."/>
            <person name="Minotti R."/>
            <person name="Castillo R."/>
            <person name="Santoro R."/>
            <person name="Hassa P.O."/>
            <person name="Tschopp J."/>
            <person name="Hottiger M.O."/>
        </authorList>
    </citation>
    <scope>FUNCTION</scope>
    <scope>CATALYTIC ACTIVITY</scope>
</reference>
<reference key="10">
    <citation type="journal article" date="2014" name="Mol. Cell. Proteomics">
        <title>Immunoaffinity enrichment and mass spectrometry analysis of protein methylation.</title>
        <authorList>
            <person name="Guo A."/>
            <person name="Gu H."/>
            <person name="Zhou J."/>
            <person name="Mulhern D."/>
            <person name="Wang Y."/>
            <person name="Lee K.A."/>
            <person name="Yang V."/>
            <person name="Aguiar M."/>
            <person name="Kornhauser J."/>
            <person name="Jia X."/>
            <person name="Ren J."/>
            <person name="Beausoleil S.A."/>
            <person name="Silva J.C."/>
            <person name="Vemulapalli V."/>
            <person name="Bedford M.T."/>
            <person name="Comb M.J."/>
        </authorList>
    </citation>
    <scope>METHYLATION [LARGE SCALE ANALYSIS] AT ARG-343</scope>
    <scope>IDENTIFICATION BY MASS SPECTROMETRY [LARGE SCALE ANALYSIS]</scope>
    <source>
        <tissue>Embryo</tissue>
    </source>
</reference>
<reference key="11">
    <citation type="journal article" date="2017" name="Immunity">
        <title>Inflammasome activation triggers caspase-1-mediated cleavage of cGAS to regulate responses to DNA virus infection.</title>
        <authorList>
            <person name="Wang Y."/>
            <person name="Ning X."/>
            <person name="Gao P."/>
            <person name="Wu S."/>
            <person name="Sha M."/>
            <person name="Lv M."/>
            <person name="Zhou X."/>
            <person name="Gao J."/>
            <person name="Fang R."/>
            <person name="Meng G."/>
            <person name="Su X."/>
            <person name="Jiang Z."/>
        </authorList>
    </citation>
    <scope>FUNCTION</scope>
    <scope>DISRUPTION PHENOTYPE</scope>
</reference>
<reference key="12">
    <citation type="journal article" date="2019" name="Nat. Immunol.">
        <title>SERPINB1-mediated checkpoint of inflammatory caspase activation.</title>
        <authorList>
            <person name="Choi Y.J."/>
            <person name="Kim S."/>
            <person name="Choi Y."/>
            <person name="Nielsen T.B."/>
            <person name="Yan J."/>
            <person name="Lu A."/>
            <person name="Ruan J."/>
            <person name="Lee H.R."/>
            <person name="Wu H."/>
            <person name="Spellberg B."/>
            <person name="Jung J.U."/>
        </authorList>
    </citation>
    <scope>FUNCTION</scope>
    <scope>INTERACTION WITH SERPINB1A; SERPINB1B AND SERPINB1C</scope>
</reference>
<reference key="13">
    <citation type="journal article" date="2020" name="Cell">
        <title>Structural mechanism for GSDMD targeting by autoprocessed caspases in pyroptosis.</title>
        <authorList>
            <person name="Wang K."/>
            <person name="Sun Q."/>
            <person name="Zhong X."/>
            <person name="Zeng M."/>
            <person name="Zeng H."/>
            <person name="Shi X."/>
            <person name="Li Z."/>
            <person name="Wang Y."/>
            <person name="Zhao Q."/>
            <person name="Shao F."/>
            <person name="Ding J."/>
        </authorList>
    </citation>
    <scope>FUNCTION</scope>
    <scope>SUBUNIT</scope>
    <scope>PROTEOLYTIC CLEAVAGE</scope>
    <scope>MUTAGENESIS OF 102-GLU--ASP-122 AND ILE-316</scope>
</reference>
<reference key="14">
    <citation type="journal article" date="2021" name="Nature">
        <title>AIM2 forms a complex with pyrin and ZBP1 to drive PANoptosis and host defence.</title>
        <authorList>
            <person name="Lee S."/>
            <person name="Karki R."/>
            <person name="Wang Y."/>
            <person name="Nguyen L.N."/>
            <person name="Kalathur R.C."/>
            <person name="Kanneganti T.D."/>
        </authorList>
    </citation>
    <scope>IDENTIFICATION IN THE AIM2 PANOPTOSOME COMPLEX</scope>
</reference>
<reference key="15">
    <citation type="journal article" date="2022" name="Nature">
        <title>Caspase-7 activates ASM to repair gasdermin and perforin pores.</title>
        <authorList>
            <person name="Nozaki K."/>
            <person name="Maltez V.I."/>
            <person name="Rayamajhi M."/>
            <person name="Tubbs A.L."/>
            <person name="Mitchell J.E."/>
            <person name="Lacey C.A."/>
            <person name="Harvest C.K."/>
            <person name="Li L."/>
            <person name="Nash W.T."/>
            <person name="Larson H.N."/>
            <person name="McGlaughon B.D."/>
            <person name="Moorman N.J."/>
            <person name="Brown M.G."/>
            <person name="Whitmire J.K."/>
            <person name="Miao E.A."/>
        </authorList>
    </citation>
    <scope>FUNCTION</scope>
    <scope>CATALYTIC ACTIVITY</scope>
</reference>
<comment type="function">
    <text evidence="1 7 9 10 12">Thiol protease involved in a variety of inflammatory processes by proteolytically cleaving other proteins, such as the precursors of the inflammatory cytokines interleukin-1 beta (IL1B) and interleukin 18 (IL18) as well as the pyroptosis inducer Gasdermin-D (GSDMD), into active mature peptides (PubMed:21147462, PubMed:32109412). Plays a key role in cell immunity as an inflammatory response initiator: once activated through formation of an inflammasome complex, it initiates a pro-inflammatory response through the cleavage of the two inflammatory cytokines IL1B and IL18, releasing the mature cytokines which are involved in a variety of inflammatory processes (PubMed:21147462). Cleaves a tetrapeptide after an Asp residue at position P1 (PubMed:21147462). Also initiates pyroptosis, a programmed lytic cell death pathway, through cleavage of GSDMD (PubMed:32109412). In contrast to cleavage of interleukin IL1B, recognition and cleavage of GSDMD is not strictly dependent on the consensus cleavage site but depends on an exosite interface on CASP1 that recognizes and binds the Gasdermin-D, C-terminal (GSDMD-CT) part (PubMed:32109412). Cleaves and activates CASP7 in response to bacterial infection, promoting plasma membrane repair (PubMed:18667412, PubMed:22464733, PubMed:35705808). Upon inflammasome activation, during DNA virus infection but not RNA virus challenge, controls antiviral immunity through the cleavage of CGAS, rendering it inactive (PubMed:28314590). In apoptotic cells, cleaves SPHK2 which is released from cells and remains enzymatically active extracellularly (By similarity).</text>
</comment>
<comment type="catalytic activity">
    <reaction evidence="6 7 8 12">
        <text>Strict requirement for an Asp residue at position P1 and has a preferred cleavage sequence of Tyr-Val-Ala-Asp-|-.</text>
        <dbReference type="EC" id="3.4.22.36"/>
    </reaction>
</comment>
<comment type="subunit">
    <text evidence="1 10 11">Heterotetramer that consists of two anti-parallel arranged heterodimers, each one formed by a 20 kDa (Caspase-1 subunit p20) and a 10 kDa (Caspase-1 subunit p10) subunit (PubMed:32109412). May be a component of the inflammasome, a protein complex which also includes PYCARD, CARD8 and NLRP2 and whose function would be the activation of pro-inflammatory caspases (By similarity). Component of the AIM2 PANoptosome complex, a multiprotein complex that drives inflammatory cell death (PANoptosis) (PubMed:34471287). Both the p10 and p20 subunits interact with MEFV (By similarity). Interacts with CARD17P/INCA and CARD18 (By similarity). Interacts with SERPINB1; this interaction regulates CASP1 activity (By similarity).</text>
</comment>
<comment type="subunit">
    <molecule>Caspase-1 subunit p20</molecule>
    <text evidence="10">Heterotetramer that consists of two anti-parallel arranged heterodimers, each one formed by a 20 kDa (Caspase-1 subunit p20) and a 10 kDa (Caspase-1 subunit p10) subunit.</text>
</comment>
<comment type="subunit">
    <molecule>Caspase-1 subunit p10</molecule>
    <text evidence="10">Heterotetramer that consists of two anti-parallel arranged heterodimers, each one formed by a 20 kDa (Caspase-1 subunit p20) and a 10 kDa (Caspase-1 subunit p10) subunit.</text>
</comment>
<comment type="interaction">
    <interactant intactId="EBI-489700">
        <id>P29452</id>
    </interactant>
    <interactant intactId="EBI-16006652">
        <id>Q3UP24</id>
        <label>Nlrc4</label>
    </interactant>
    <organismsDiffer>false</organismsDiffer>
    <experiments>2</experiments>
</comment>
<comment type="interaction">
    <interactant intactId="EBI-489700">
        <id>P29452</id>
    </interactant>
    <interactant intactId="EBI-6910832">
        <id>Q8R4B8</id>
        <label>Nlrp3</label>
    </interactant>
    <organismsDiffer>false</organismsDiffer>
    <experiments>2</experiments>
</comment>
<comment type="interaction">
    <interactant intactId="EBI-489700">
        <id>P29452</id>
    </interactant>
    <interactant intactId="EBI-6253348">
        <id>Q9EPB4</id>
        <label>Pycard</label>
    </interactant>
    <organismsDiffer>false</organismsDiffer>
    <experiments>6</experiments>
</comment>
<comment type="interaction">
    <interactant intactId="EBI-489700">
        <id>P29452</id>
    </interactant>
    <interactant intactId="EBI-490239">
        <id>P18011</id>
        <label>sctE</label>
    </interactant>
    <organismsDiffer>true</organismsDiffer>
    <experiments>3</experiments>
</comment>
<comment type="interaction">
    <interactant intactId="EBI-489700">
        <id>P29452</id>
    </interactant>
    <interactant intactId="EBI-489689">
        <id>Q56134</id>
        <label>sctE1</label>
    </interactant>
    <organismsDiffer>true</organismsDiffer>
    <experiments>2</experiments>
</comment>
<comment type="subcellular location">
    <subcellularLocation>
        <location evidence="7">Cytoplasm</location>
    </subcellularLocation>
    <subcellularLocation>
        <location evidence="1">Cell membrane</location>
    </subcellularLocation>
</comment>
<comment type="tissue specificity">
    <text evidence="5">High level expression seen in spleen and lung, low level expression seen in brain, heart, liver, kidney, testis and skeletal muscle.</text>
</comment>
<comment type="PTM">
    <text evidence="7 10">The two subunits are derived from the precursor sequence by an autocatalytic mechanism.</text>
</comment>
<comment type="PTM">
    <text evidence="1">Ubiquitinated via 'Lys-11'-linked polyubiquitination. Deubiquitinated by USP8.</text>
</comment>
<comment type="disruption phenotype">
    <text evidence="9">Mutants are resitant to vaccinia virus (VACV) but not vesicular somatitis virus (VSV) infection. They show lower viral loads in the lungs compared to wild type mice, they produce higher levels of type I IFN, IL6 and RSAD2/Viperin after VCAV INFECTION.</text>
</comment>
<comment type="similarity">
    <text evidence="13">Belongs to the peptidase C14A family.</text>
</comment>
<proteinExistence type="evidence at protein level"/>
<accession>P29452</accession>